<comment type="function">
    <text evidence="1">Plays a role in cell envelope biogenesis, maintenance of cell envelope integrity and membrane homeostasis.</text>
</comment>
<comment type="subcellular location">
    <subcellularLocation>
        <location evidence="1">Cell inner membrane</location>
        <topology evidence="1">Multi-pass membrane protein</topology>
    </subcellularLocation>
</comment>
<comment type="similarity">
    <text evidence="1">Belongs to the YciB family.</text>
</comment>
<name>YCIB_SALPB</name>
<proteinExistence type="inferred from homology"/>
<sequence>MKQFLDFLPLVVFFAFYKLYDIYAATSALIVATAIVLIYSWVRYRKIEKMALITFVLVAVFGGLTLFFHNDEFIKWKVTVIYALFAGALLISQWVMKKPLIQRMLGKELALPQQVWSKLNLAWALFFIACGLANIYIAFWLPQNIWVNFKVFGLTALTLIFTLLSGVYIYRHLPQEDKS</sequence>
<protein>
    <recommendedName>
        <fullName evidence="1">Inner membrane-spanning protein YciB</fullName>
    </recommendedName>
</protein>
<accession>A9MWQ4</accession>
<reference key="1">
    <citation type="submission" date="2007-11" db="EMBL/GenBank/DDBJ databases">
        <authorList>
            <consortium name="The Salmonella enterica serovar Paratyphi B Genome Sequencing Project"/>
            <person name="McClelland M."/>
            <person name="Sanderson E.K."/>
            <person name="Porwollik S."/>
            <person name="Spieth J."/>
            <person name="Clifton W.S."/>
            <person name="Fulton R."/>
            <person name="Cordes M."/>
            <person name="Wollam A."/>
            <person name="Shah N."/>
            <person name="Pepin K."/>
            <person name="Bhonagiri V."/>
            <person name="Nash W."/>
            <person name="Johnson M."/>
            <person name="Thiruvilangam P."/>
            <person name="Wilson R."/>
        </authorList>
    </citation>
    <scope>NUCLEOTIDE SEQUENCE [LARGE SCALE GENOMIC DNA]</scope>
    <source>
        <strain>ATCC BAA-1250 / SPB7</strain>
    </source>
</reference>
<gene>
    <name evidence="1" type="primary">yciB</name>
    <name type="ordered locus">SPAB_01509</name>
</gene>
<keyword id="KW-0997">Cell inner membrane</keyword>
<keyword id="KW-1003">Cell membrane</keyword>
<keyword id="KW-0472">Membrane</keyword>
<keyword id="KW-0812">Transmembrane</keyword>
<keyword id="KW-1133">Transmembrane helix</keyword>
<organism>
    <name type="scientific">Salmonella paratyphi B (strain ATCC BAA-1250 / SPB7)</name>
    <dbReference type="NCBI Taxonomy" id="1016998"/>
    <lineage>
        <taxon>Bacteria</taxon>
        <taxon>Pseudomonadati</taxon>
        <taxon>Pseudomonadota</taxon>
        <taxon>Gammaproteobacteria</taxon>
        <taxon>Enterobacterales</taxon>
        <taxon>Enterobacteriaceae</taxon>
        <taxon>Salmonella</taxon>
    </lineage>
</organism>
<evidence type="ECO:0000255" key="1">
    <source>
        <dbReference type="HAMAP-Rule" id="MF_00189"/>
    </source>
</evidence>
<feature type="chain" id="PRO_1000077493" description="Inner membrane-spanning protein YciB">
    <location>
        <begin position="1"/>
        <end position="179"/>
    </location>
</feature>
<feature type="transmembrane region" description="Helical" evidence="1">
    <location>
        <begin position="22"/>
        <end position="42"/>
    </location>
</feature>
<feature type="transmembrane region" description="Helical" evidence="1">
    <location>
        <begin position="50"/>
        <end position="70"/>
    </location>
</feature>
<feature type="transmembrane region" description="Helical" evidence="1">
    <location>
        <begin position="76"/>
        <end position="96"/>
    </location>
</feature>
<feature type="transmembrane region" description="Helical" evidence="1">
    <location>
        <begin position="121"/>
        <end position="141"/>
    </location>
</feature>
<feature type="transmembrane region" description="Helical" evidence="1">
    <location>
        <begin position="149"/>
        <end position="169"/>
    </location>
</feature>
<dbReference type="EMBL" id="CP000886">
    <property type="protein sequence ID" value="ABX66907.1"/>
    <property type="molecule type" value="Genomic_DNA"/>
</dbReference>
<dbReference type="RefSeq" id="WP_000808682.1">
    <property type="nucleotide sequence ID" value="NC_010102.1"/>
</dbReference>
<dbReference type="KEGG" id="spq:SPAB_01509"/>
<dbReference type="PATRIC" id="fig|1016998.12.peg.1417"/>
<dbReference type="HOGENOM" id="CLU_089554_2_0_6"/>
<dbReference type="BioCyc" id="SENT1016998:SPAB_RS06135-MONOMER"/>
<dbReference type="Proteomes" id="UP000008556">
    <property type="component" value="Chromosome"/>
</dbReference>
<dbReference type="GO" id="GO:0005886">
    <property type="term" value="C:plasma membrane"/>
    <property type="evidence" value="ECO:0007669"/>
    <property type="project" value="UniProtKB-SubCell"/>
</dbReference>
<dbReference type="HAMAP" id="MF_00189">
    <property type="entry name" value="YciB"/>
    <property type="match status" value="1"/>
</dbReference>
<dbReference type="InterPro" id="IPR006008">
    <property type="entry name" value="YciB"/>
</dbReference>
<dbReference type="NCBIfam" id="TIGR00997">
    <property type="entry name" value="ispZ"/>
    <property type="match status" value="1"/>
</dbReference>
<dbReference type="NCBIfam" id="NF001324">
    <property type="entry name" value="PRK00259.1-2"/>
    <property type="match status" value="1"/>
</dbReference>
<dbReference type="NCBIfam" id="NF001325">
    <property type="entry name" value="PRK00259.1-3"/>
    <property type="match status" value="1"/>
</dbReference>
<dbReference type="NCBIfam" id="NF001326">
    <property type="entry name" value="PRK00259.1-4"/>
    <property type="match status" value="1"/>
</dbReference>
<dbReference type="PANTHER" id="PTHR36917:SF1">
    <property type="entry name" value="INNER MEMBRANE-SPANNING PROTEIN YCIB"/>
    <property type="match status" value="1"/>
</dbReference>
<dbReference type="PANTHER" id="PTHR36917">
    <property type="entry name" value="INTRACELLULAR SEPTATION PROTEIN A-RELATED"/>
    <property type="match status" value="1"/>
</dbReference>
<dbReference type="Pfam" id="PF04279">
    <property type="entry name" value="IspA"/>
    <property type="match status" value="1"/>
</dbReference>